<evidence type="ECO:0000250" key="1"/>
<evidence type="ECO:0000255" key="2">
    <source>
        <dbReference type="PROSITE-ProRule" id="PRU00424"/>
    </source>
</evidence>
<evidence type="ECO:0000305" key="3"/>
<keyword id="KW-0963">Cytoplasm</keyword>
<keyword id="KW-0418">Kinase</keyword>
<keyword id="KW-0598">Phosphotransferase system</keyword>
<keyword id="KW-1185">Reference proteome</keyword>
<keyword id="KW-0762">Sugar transport</keyword>
<keyword id="KW-0808">Transferase</keyword>
<keyword id="KW-0813">Transport</keyword>
<organism>
    <name type="scientific">Escherichia coli (strain K12)</name>
    <dbReference type="NCBI Taxonomy" id="83333"/>
    <lineage>
        <taxon>Bacteria</taxon>
        <taxon>Pseudomonadati</taxon>
        <taxon>Pseudomonadota</taxon>
        <taxon>Gammaproteobacteria</taxon>
        <taxon>Enterobacterales</taxon>
        <taxon>Enterobacteriaceae</taxon>
        <taxon>Escherichia</taxon>
    </lineage>
</organism>
<feature type="chain" id="PRO_0000186659" description="N-acetylgalactosamine-specific phosphotransferase enzyme IIB component 2">
    <location>
        <begin position="1"/>
        <end position="157"/>
    </location>
</feature>
<feature type="domain" description="PTS EIIB type-4" evidence="2">
    <location>
        <begin position="1"/>
        <end position="157"/>
    </location>
</feature>
<feature type="active site" description="Pros-phosphohistidine intermediate" evidence="1">
    <location>
        <position position="15"/>
    </location>
</feature>
<dbReference type="EC" id="2.7.1.-"/>
<dbReference type="EMBL" id="U18997">
    <property type="protein sequence ID" value="AAA57936.1"/>
    <property type="status" value="ALT_INIT"/>
    <property type="molecule type" value="Genomic_DNA"/>
</dbReference>
<dbReference type="EMBL" id="U00096">
    <property type="protein sequence ID" value="AAC76167.2"/>
    <property type="molecule type" value="Genomic_DNA"/>
</dbReference>
<dbReference type="EMBL" id="AP009048">
    <property type="protein sequence ID" value="BAE77180.1"/>
    <property type="molecule type" value="Genomic_DNA"/>
</dbReference>
<dbReference type="RefSeq" id="NP_417602.4">
    <property type="nucleotide sequence ID" value="NC_000913.3"/>
</dbReference>
<dbReference type="RefSeq" id="WP_001336162.1">
    <property type="nucleotide sequence ID" value="NZ_LN832404.1"/>
</dbReference>
<dbReference type="SMR" id="P42904"/>
<dbReference type="BioGRID" id="4261156">
    <property type="interactions" value="13"/>
</dbReference>
<dbReference type="FunCoup" id="P42904">
    <property type="interactions" value="252"/>
</dbReference>
<dbReference type="IntAct" id="P42904">
    <property type="interactions" value="2"/>
</dbReference>
<dbReference type="STRING" id="511145.b3133"/>
<dbReference type="jPOST" id="P42904"/>
<dbReference type="PaxDb" id="511145-b3133"/>
<dbReference type="EnsemblBacteria" id="AAC76167">
    <property type="protein sequence ID" value="AAC76167"/>
    <property type="gene ID" value="b3133"/>
</dbReference>
<dbReference type="GeneID" id="75203751"/>
<dbReference type="GeneID" id="947648"/>
<dbReference type="KEGG" id="ecj:JW3102"/>
<dbReference type="KEGG" id="eco:b3133"/>
<dbReference type="KEGG" id="ecoc:C3026_17075"/>
<dbReference type="PATRIC" id="fig|1411691.4.peg.3598"/>
<dbReference type="EchoBASE" id="EB2617"/>
<dbReference type="eggNOG" id="COG3444">
    <property type="taxonomic scope" value="Bacteria"/>
</dbReference>
<dbReference type="HOGENOM" id="CLU_116175_2_1_6"/>
<dbReference type="InParanoid" id="P42904"/>
<dbReference type="OMA" id="QIIETWL"/>
<dbReference type="OrthoDB" id="7065728at2"/>
<dbReference type="PhylomeDB" id="P42904"/>
<dbReference type="BioCyc" id="EcoCyc:G7632-MONOMER"/>
<dbReference type="PRO" id="PR:P42904"/>
<dbReference type="Proteomes" id="UP000000625">
    <property type="component" value="Chromosome"/>
</dbReference>
<dbReference type="GO" id="GO:0005737">
    <property type="term" value="C:cytoplasm"/>
    <property type="evidence" value="ECO:0007669"/>
    <property type="project" value="UniProtKB-SubCell"/>
</dbReference>
<dbReference type="GO" id="GO:0016301">
    <property type="term" value="F:kinase activity"/>
    <property type="evidence" value="ECO:0007669"/>
    <property type="project" value="UniProtKB-KW"/>
</dbReference>
<dbReference type="GO" id="GO:0008982">
    <property type="term" value="F:protein-N(PI)-phosphohistidine-sugar phosphotransferase activity"/>
    <property type="evidence" value="ECO:0007669"/>
    <property type="project" value="InterPro"/>
</dbReference>
<dbReference type="GO" id="GO:0009401">
    <property type="term" value="P:phosphoenolpyruvate-dependent sugar phosphotransferase system"/>
    <property type="evidence" value="ECO:0007669"/>
    <property type="project" value="UniProtKB-KW"/>
</dbReference>
<dbReference type="CDD" id="cd00001">
    <property type="entry name" value="PTS_IIB_man"/>
    <property type="match status" value="1"/>
</dbReference>
<dbReference type="Gene3D" id="3.40.35.10">
    <property type="entry name" value="Phosphotransferase system, sorbose subfamily IIB component"/>
    <property type="match status" value="1"/>
</dbReference>
<dbReference type="InterPro" id="IPR004720">
    <property type="entry name" value="PTS_IIB_sorbose-sp"/>
</dbReference>
<dbReference type="InterPro" id="IPR036667">
    <property type="entry name" value="PTS_IIB_sorbose-sp_sf"/>
</dbReference>
<dbReference type="InterPro" id="IPR018455">
    <property type="entry name" value="PTS_IIB_sorbose-sp_subgr"/>
</dbReference>
<dbReference type="NCBIfam" id="NF007288">
    <property type="entry name" value="PRK09756.1"/>
    <property type="match status" value="1"/>
</dbReference>
<dbReference type="NCBIfam" id="NF008508">
    <property type="entry name" value="PRK11425.1"/>
    <property type="match status" value="1"/>
</dbReference>
<dbReference type="NCBIfam" id="TIGR00854">
    <property type="entry name" value="pts-sorbose"/>
    <property type="match status" value="1"/>
</dbReference>
<dbReference type="Pfam" id="PF03830">
    <property type="entry name" value="PTSIIB_sorb"/>
    <property type="match status" value="1"/>
</dbReference>
<dbReference type="SUPFAM" id="SSF52728">
    <property type="entry name" value="PTS IIb component"/>
    <property type="match status" value="1"/>
</dbReference>
<dbReference type="PROSITE" id="PS51101">
    <property type="entry name" value="PTS_EIIB_TYPE_4"/>
    <property type="match status" value="1"/>
</dbReference>
<name>PTPB2_ECOLI</name>
<reference key="1">
    <citation type="journal article" date="1997" name="Science">
        <title>The complete genome sequence of Escherichia coli K-12.</title>
        <authorList>
            <person name="Blattner F.R."/>
            <person name="Plunkett G. III"/>
            <person name="Bloch C.A."/>
            <person name="Perna N.T."/>
            <person name="Burland V."/>
            <person name="Riley M."/>
            <person name="Collado-Vides J."/>
            <person name="Glasner J.D."/>
            <person name="Rode C.K."/>
            <person name="Mayhew G.F."/>
            <person name="Gregor J."/>
            <person name="Davis N.W."/>
            <person name="Kirkpatrick H.A."/>
            <person name="Goeden M.A."/>
            <person name="Rose D.J."/>
            <person name="Mau B."/>
            <person name="Shao Y."/>
        </authorList>
    </citation>
    <scope>NUCLEOTIDE SEQUENCE [LARGE SCALE GENOMIC DNA]</scope>
    <source>
        <strain>K12 / MG1655 / ATCC 47076</strain>
    </source>
</reference>
<reference key="2">
    <citation type="journal article" date="2006" name="Mol. Syst. Biol.">
        <title>Highly accurate genome sequences of Escherichia coli K-12 strains MG1655 and W3110.</title>
        <authorList>
            <person name="Hayashi K."/>
            <person name="Morooka N."/>
            <person name="Yamamoto Y."/>
            <person name="Fujita K."/>
            <person name="Isono K."/>
            <person name="Choi S."/>
            <person name="Ohtsubo E."/>
            <person name="Baba T."/>
            <person name="Wanner B.L."/>
            <person name="Mori H."/>
            <person name="Horiuchi T."/>
        </authorList>
    </citation>
    <scope>NUCLEOTIDE SEQUENCE [LARGE SCALE GENOMIC DNA]</scope>
    <source>
        <strain>K12 / W3110 / ATCC 27325 / DSM 5911</strain>
    </source>
</reference>
<reference key="3">
    <citation type="journal article" date="1996" name="Microbiology">
        <title>Novel phosphotransferase genes revealed by bacterial genome sequencing: a gene cluster encoding a putative N-acetylgalactosamine metabolic pathway in Escherichia coli.</title>
        <authorList>
            <person name="Reizer J."/>
            <person name="Ramseier T.M."/>
            <person name="Reizer A."/>
            <person name="Charbit A."/>
            <person name="Saier M.H. Jr."/>
        </authorList>
    </citation>
    <scope>DISCUSSION OF SEQUENCE</scope>
</reference>
<protein>
    <recommendedName>
        <fullName>N-acetylgalactosamine-specific phosphotransferase enzyme IIB component 2</fullName>
        <ecNumber>2.7.1.-</ecNumber>
    </recommendedName>
    <alternativeName>
        <fullName>EIIB-Aga'</fullName>
    </alternativeName>
    <alternativeName>
        <fullName>PTS system N-acetylgalactosamine-specific EIIB component 2</fullName>
    </alternativeName>
</protein>
<gene>
    <name type="primary">agaV</name>
    <name type="synonym">yhaY</name>
    <name type="ordered locus">b3133</name>
    <name type="ordered locus">JW3102</name>
</gene>
<proteinExistence type="predicted"/>
<comment type="function">
    <text>The phosphoenolpyruvate-dependent sugar phosphotransferase system (sugar PTS), a major carbohydrate active -transport system, catalyzes the phosphorylation of incoming sugar substrates concomitantly with their translocation across the cell membrane. This system is involved in N-acetylgalactosamine transport.</text>
</comment>
<comment type="subcellular location">
    <subcellularLocation>
        <location evidence="3">Cytoplasm</location>
    </subcellularLocation>
</comment>
<comment type="domain">
    <text>The EIIB domain is phosphorylated by phospho-EIIA on a cysteinyl or histidyl residue, depending on the transported sugar. Then, it transfers the phosphoryl group to the sugar substrate concomitantly with the sugar uptake processed by the EIIC domain.</text>
</comment>
<comment type="sequence caution" evidence="3">
    <conflict type="erroneous initiation">
        <sequence resource="EMBL-CDS" id="AAA57936"/>
    </conflict>
    <text>Extended N-terminus.</text>
</comment>
<accession>P42904</accession>
<accession>P76669</accession>
<accession>Q2M976</accession>
<sequence>MPNIVLSRIDERLIHGQVGVQWVGFAGANLVLVANDEVAEDPVQQNLMEMVLAEGIAVRFWTLQKVIDNIHRAADRQKILLVCKTPADFLTLVKGGVPVNRINVGNMHYANGKQQIAKTVSVDAGDIAAFNDLKTAGVECFVQGVPTEPAVDLFKLL</sequence>